<accession>Q9ESL4</accession>
<accession>Q3V1X8</accession>
<accession>Q8BR73</accession>
<accession>Q9ESL3</accession>
<evidence type="ECO:0000250" key="1">
    <source>
        <dbReference type="UniProtKB" id="P80192"/>
    </source>
</evidence>
<evidence type="ECO:0000250" key="2">
    <source>
        <dbReference type="UniProtKB" id="Q9NYL2"/>
    </source>
</evidence>
<evidence type="ECO:0000255" key="3">
    <source>
        <dbReference type="PROSITE-ProRule" id="PRU00159"/>
    </source>
</evidence>
<evidence type="ECO:0000255" key="4">
    <source>
        <dbReference type="PROSITE-ProRule" id="PRU00184"/>
    </source>
</evidence>
<evidence type="ECO:0000255" key="5">
    <source>
        <dbReference type="PROSITE-ProRule" id="PRU10027"/>
    </source>
</evidence>
<evidence type="ECO:0000256" key="6">
    <source>
        <dbReference type="SAM" id="MobiDB-lite"/>
    </source>
</evidence>
<evidence type="ECO:0000269" key="7">
    <source>
    </source>
</evidence>
<evidence type="ECO:0000269" key="8">
    <source>
    </source>
</evidence>
<evidence type="ECO:0000269" key="9">
    <source>
    </source>
</evidence>
<evidence type="ECO:0000269" key="10">
    <source>
    </source>
</evidence>
<evidence type="ECO:0000303" key="11">
    <source>
    </source>
</evidence>
<evidence type="ECO:0000303" key="12">
    <source>
    </source>
</evidence>
<evidence type="ECO:0000303" key="13">
    <source>
    </source>
</evidence>
<evidence type="ECO:0000305" key="14"/>
<evidence type="ECO:0000312" key="15">
    <source>
        <dbReference type="EMBL" id="AAH23718.1"/>
    </source>
</evidence>
<evidence type="ECO:0000312" key="16">
    <source>
        <dbReference type="EMBL" id="BAB16442.1"/>
    </source>
</evidence>
<evidence type="ECO:0000312" key="17">
    <source>
        <dbReference type="MGI" id="MGI:2443258"/>
    </source>
</evidence>
<evidence type="ECO:0007744" key="18">
    <source>
    </source>
</evidence>
<organism>
    <name type="scientific">Mus musculus</name>
    <name type="common">Mouse</name>
    <dbReference type="NCBI Taxonomy" id="10090"/>
    <lineage>
        <taxon>Eukaryota</taxon>
        <taxon>Metazoa</taxon>
        <taxon>Chordata</taxon>
        <taxon>Craniata</taxon>
        <taxon>Vertebrata</taxon>
        <taxon>Euteleostomi</taxon>
        <taxon>Mammalia</taxon>
        <taxon>Eutheria</taxon>
        <taxon>Euarchontoglires</taxon>
        <taxon>Glires</taxon>
        <taxon>Rodentia</taxon>
        <taxon>Myomorpha</taxon>
        <taxon>Muroidea</taxon>
        <taxon>Muridae</taxon>
        <taxon>Murinae</taxon>
        <taxon>Mus</taxon>
        <taxon>Mus</taxon>
    </lineage>
</organism>
<keyword id="KW-0007">Acetylation</keyword>
<keyword id="KW-0025">Alternative splicing</keyword>
<keyword id="KW-0067">ATP-binding</keyword>
<keyword id="KW-0131">Cell cycle</keyword>
<keyword id="KW-0963">Cytoplasm</keyword>
<keyword id="KW-0903">Direct protein sequencing</keyword>
<keyword id="KW-0418">Kinase</keyword>
<keyword id="KW-0460">Magnesium</keyword>
<keyword id="KW-0479">Metal-binding</keyword>
<keyword id="KW-0547">Nucleotide-binding</keyword>
<keyword id="KW-0539">Nucleus</keyword>
<keyword id="KW-0597">Phosphoprotein</keyword>
<keyword id="KW-1185">Reference proteome</keyword>
<keyword id="KW-0694">RNA-binding</keyword>
<keyword id="KW-0699">rRNA-binding</keyword>
<keyword id="KW-0723">Serine/threonine-protein kinase</keyword>
<keyword id="KW-0808">Transferase</keyword>
<comment type="function">
    <text evidence="2 7 9">Stress-activated component of a protein kinase signal transduction cascade that promotes programmed cell death in response to various stress, such as ribosomal stress, osmotic shock and ionizing radiation (PubMed:11042189, PubMed:27598200). Acts by catalyzing phosphorylation of MAP kinase kinases, leading to activation of the JNK (MAPK8/JNK1, MAPK9/JNK2 and/or MAPK10/JNK3) and MAP kinase p38 (MAPK11, MAPK12, MAPK13 and/or MAPK14) pathways (PubMed:11042189). Activates JNK through phosphorylation of MAP2K4/MKK4 and MAP2K7/MKK7, and MAP kinase p38 gamma (MAPK12) via phosphorylation of MAP2K3/MKK3 and MAP2K6/MKK6 (PubMed:11042189). Involved in stress associated with adrenergic stimulation: contributes to cardiac decompensation during periods of acute cardiac stress (By similarity). May be involved in regulation of S and G2 cell cycle checkpoint by mediating phosphorylation of CHEK2 (By similarity).</text>
</comment>
<comment type="function">
    <molecule>Isoform ZAKalpha</molecule>
    <text evidence="2 10">Key component of the stress-activated protein kinase signaling cascade in response to ribotoxic stress or UV-B irradiation (PubMed:32289254). Acts as the proximal sensor of ribosome collisions during the ribotoxic stress response (RSR) (PubMed:32289254). Directly binds to the ribosome by inserting its flexible C-terminus into the ribosomal intersubunit space, thereby acting as a sentinel for colliding ribosomes (By similarity). Upon ribosome collisions, activates either the stress-activated protein kinase signal transduction cascade or the integrated stress response (ISR), leading to programmed cell death or cell survival, respectively (By similarity). Dangerous levels of ribosome collisions trigger the autophosphorylation and activation of MAP3K20, which dissociates from colliding ribosomes and phosphorylates MAP kinase kinases, leading to activation of the JNK and MAP kinase p38 pathways that promote programmed cell death (By similarity). Less dangerous levels of ribosome collisions trigger the integrated stress response (ISR): MAP3K20 activates EIF2AK4/GCN2 independently of its protein-kinase activity, promoting EIF2AK4/GCN2-mediated phosphorylation of EIF2S1/eIF-2-alpha (By similarity). Also acts as a histone kinase by phosphorylating histone H3 at 'Ser-28' (H3S28ph) (By similarity).</text>
</comment>
<comment type="function">
    <molecule>Isoform ZAKbeta</molecule>
    <text evidence="2">Isoform that lacks the C-terminal region that mediates ribosome-binding: does not act as a sensor of ribosome collisions in response to ribotoxic stress. May act as an antagonist of isoform ZAKalpha: interacts with isoform ZAKalpha, leading to decrease the expression of isoform ZAKalpha.</text>
</comment>
<comment type="catalytic activity">
    <reaction evidence="7">
        <text>L-seryl-[protein] + ATP = O-phospho-L-seryl-[protein] + ADP + H(+)</text>
        <dbReference type="Rhea" id="RHEA:17989"/>
        <dbReference type="Rhea" id="RHEA-COMP:9863"/>
        <dbReference type="Rhea" id="RHEA-COMP:11604"/>
        <dbReference type="ChEBI" id="CHEBI:15378"/>
        <dbReference type="ChEBI" id="CHEBI:29999"/>
        <dbReference type="ChEBI" id="CHEBI:30616"/>
        <dbReference type="ChEBI" id="CHEBI:83421"/>
        <dbReference type="ChEBI" id="CHEBI:456216"/>
        <dbReference type="EC" id="2.7.11.25"/>
    </reaction>
    <physiologicalReaction direction="left-to-right" evidence="7">
        <dbReference type="Rhea" id="RHEA:17990"/>
    </physiologicalReaction>
</comment>
<comment type="catalytic activity">
    <reaction evidence="7">
        <text>L-threonyl-[protein] + ATP = O-phospho-L-threonyl-[protein] + ADP + H(+)</text>
        <dbReference type="Rhea" id="RHEA:46608"/>
        <dbReference type="Rhea" id="RHEA-COMP:11060"/>
        <dbReference type="Rhea" id="RHEA-COMP:11605"/>
        <dbReference type="ChEBI" id="CHEBI:15378"/>
        <dbReference type="ChEBI" id="CHEBI:30013"/>
        <dbReference type="ChEBI" id="CHEBI:30616"/>
        <dbReference type="ChEBI" id="CHEBI:61977"/>
        <dbReference type="ChEBI" id="CHEBI:456216"/>
        <dbReference type="EC" id="2.7.11.25"/>
    </reaction>
    <physiologicalReaction direction="left-to-right" evidence="7">
        <dbReference type="Rhea" id="RHEA:46609"/>
    </physiologicalReaction>
</comment>
<comment type="cofactor">
    <cofactor evidence="7">
        <name>Mg(2+)</name>
        <dbReference type="ChEBI" id="CHEBI:18420"/>
    </cofactor>
</comment>
<comment type="activity regulation">
    <text evidence="2">Activated in response to stress, such as ribosomal stress, osmotic shock and ionizing radiation. Activated by phosphorylation by PKN1, followed by autophosphorylation on Thr-161 and Ser-165.</text>
</comment>
<comment type="subunit">
    <text evidence="2 7">Homodimer (PubMed:11042189). Interacts with ZNF33A (By similarity). Component of a signaling complex containing at least AKAP13, PKN1, MAPK14, MAP3K20 and MAP2K3 (By similarity). Within this complex, AKAP13 interacts directly with PKN1, which in turn recruits MAPK14, MAP2K3 and MAP3K20 (By similarity). Interacts with EIF2AK4/GCN2; promoting EIF2AK4/GCN2 kinase activity (By similarity).</text>
</comment>
<comment type="subunit">
    <molecule>Isoform ZAKalpha</molecule>
    <text evidence="2">Interacts with isoform ZAKbeta.</text>
</comment>
<comment type="subunit">
    <molecule>Isoform ZAKbeta</molecule>
    <text evidence="2">Interacts with isoform ZAKalpha.</text>
</comment>
<comment type="subcellular location">
    <subcellularLocation>
        <location evidence="7">Cytoplasm</location>
    </subcellularLocation>
    <subcellularLocation>
        <location evidence="7">Nucleus</location>
    </subcellularLocation>
    <text evidence="7">Appears to shuttle between nucleus and cytoplasm.</text>
</comment>
<comment type="alternative products">
    <event type="alternative splicing"/>
    <isoform>
        <id>Q9ESL4-1</id>
        <name>ZAKalpha</name>
        <name>Alpha</name>
        <sequence type="displayed"/>
    </isoform>
    <isoform>
        <id>Q9ESL4-2</id>
        <name>ZAKbeta</name>
        <name>Beta</name>
        <sequence type="described" ref="VSP_051745 VSP_051746"/>
    </isoform>
    <isoform>
        <id>Q9ESL4-3</id>
        <name evidence="14">3</name>
        <sequence type="described" ref="VSP_051747 VSP_051748"/>
    </isoform>
</comment>
<comment type="developmental stage">
    <text evidence="8">Mainly expressed in heart and developing limbs.</text>
</comment>
<comment type="domain">
    <molecule>Isoform ZAKalpha</molecule>
    <text evidence="2">Recognizes stalled ribosomes via two separate and partially redundant sensor domains: the C-terminal domain (CTD) that binds the 18S ribosomal RNA (18S rRNA) and the sensing domain (S).</text>
</comment>
<comment type="PTM">
    <text evidence="2">Activated by phosphorylation by PKN1, followed by autophosphorylation on Thr-161 and Ser-165 (By similarity). Autophosphorylation in response to ribotoxic stress promotes dissociation from colliding ribosomes and activation (By similarity).</text>
</comment>
<comment type="disruption phenotype">
    <text evidence="8 9">Knockout results in fully penetrant lethality at 9.5 dpc due to severe cardiac edema and growth retardation (PubMed:26755636). Embryos show polydactyly of the feet (PubMed:26755636). Defects in stress-activated protein kinase signaling cascade in response to ribotoxic stress, leading to impaired activation of the JNK and MAP kinase p38 pathways (PubMed:27598200).</text>
</comment>
<comment type="similarity">
    <text evidence="14">Belongs to the protein kinase superfamily. STE Ser/Thr protein kinase family. MAP kinase kinase kinase subfamily.</text>
</comment>
<sequence>MSSLGASFVQIKFDDLQFFENCGGGSFGSVYRAKWISQDKEVAVKKLLKIEKEAEILSVLSHRNIIQFYGVILEPPNYGIVTEYASLGSLYDYINSNRSEEMDMEHIMTWATDVAKGMHYLHMEAPVKVIHRDLKSRNVVIAADGVLKICDFGASRFHNHTTHMSLVGTFPWMAPEVIQSLPVSETCDTYSYGVVLWEMLTREVPFKGLEGLQVAWLVVEKNERLTIPSSCPRSFAELLHQCWEADAKKRPSFKQIISILESMSNDTNLPDQCNSFLHNKAEWRCEIEATLERLKKLERDLSFKEQELKERERRLKMWEQKLTEQSNTPLLPSFEIGAWTEDDVYFWVQQLVRKGESSVEMSGYASLFKENNITGKRLLLLEEEDLKDMGIVSKGHIIHFKSAIEKLTHDYLNLFHFPPLIKDSGGEPEENEEKIVNLELVFGFHLKPGTGPQDCKWKMYMEMDGDEVAITYIKDVTFNTSLPDAEILKMTKPPFVMEKWIVGIAEDQTVECTVTYENDVRTPKLTKHVHSIQWDRTKPQDEVKAVQLAIQTLFSSSEGNPGSRSDSSADCQWLDTLRMRQIASHTSLQRSQSNPILGSPFFPYFANQDSYAAAVRRTQTPVKYQQITPSINPSRSSSPTQYGLSRNFSSLNLSSRDSGFSSLNDSSSERGRYSDRSRNKYYRGSVSLNSSPKGRYGGKSQHSTPSRERYSGKFYRLPQSALNTHQSPDFKRSPNDHDRRVPRTIPGMPLHPETASKAGEEESRVSEGGWTKVEYRKKTHRQLSAKTSKERTRGNYRGRRNF</sequence>
<dbReference type="EC" id="2.7.11.25"/>
<dbReference type="EMBL" id="AB049731">
    <property type="protein sequence ID" value="BAB16442.1"/>
    <property type="molecule type" value="mRNA"/>
</dbReference>
<dbReference type="EMBL" id="AB049732">
    <property type="protein sequence ID" value="BAB16443.1"/>
    <property type="molecule type" value="mRNA"/>
</dbReference>
<dbReference type="EMBL" id="AK045444">
    <property type="protein sequence ID" value="BAC32371.1"/>
    <property type="molecule type" value="mRNA"/>
</dbReference>
<dbReference type="EMBL" id="AK132186">
    <property type="protein sequence ID" value="BAE21021.1"/>
    <property type="molecule type" value="mRNA"/>
</dbReference>
<dbReference type="EMBL" id="BC023718">
    <property type="protein sequence ID" value="AAH23718.1"/>
    <property type="molecule type" value="mRNA"/>
</dbReference>
<dbReference type="CCDS" id="CCDS38143.1">
    <molecule id="Q9ESL4-1"/>
</dbReference>
<dbReference type="CCDS" id="CCDS50605.1">
    <molecule id="Q9ESL4-2"/>
</dbReference>
<dbReference type="RefSeq" id="NP_001158263.1">
    <molecule id="Q9ESL4-2"/>
    <property type="nucleotide sequence ID" value="NM_001164791.2"/>
</dbReference>
<dbReference type="RefSeq" id="NP_075544.1">
    <molecule id="Q9ESL4-1"/>
    <property type="nucleotide sequence ID" value="NM_023057.6"/>
</dbReference>
<dbReference type="RefSeq" id="NP_835185.2">
    <molecule id="Q9ESL4-3"/>
    <property type="nucleotide sequence ID" value="NM_178084.5"/>
</dbReference>
<dbReference type="RefSeq" id="XP_006500060.1">
    <molecule id="Q9ESL4-1"/>
    <property type="nucleotide sequence ID" value="XM_006499997.4"/>
</dbReference>
<dbReference type="RefSeq" id="XP_030107797.1">
    <molecule id="Q9ESL4-2"/>
    <property type="nucleotide sequence ID" value="XM_030251937.2"/>
</dbReference>
<dbReference type="SMR" id="Q9ESL4"/>
<dbReference type="BioGRID" id="211161">
    <property type="interactions" value="3"/>
</dbReference>
<dbReference type="FunCoup" id="Q9ESL4">
    <property type="interactions" value="2055"/>
</dbReference>
<dbReference type="STRING" id="10090.ENSMUSP00000088334"/>
<dbReference type="ChEMBL" id="CHEMBL4523452"/>
<dbReference type="GlyGen" id="Q9ESL4">
    <property type="glycosylation" value="1 site, 1 O-linked glycan (1 site)"/>
</dbReference>
<dbReference type="iPTMnet" id="Q9ESL4"/>
<dbReference type="PhosphoSitePlus" id="Q9ESL4"/>
<dbReference type="SwissPalm" id="Q9ESL4"/>
<dbReference type="jPOST" id="Q9ESL4"/>
<dbReference type="PaxDb" id="10090-ENSMUSP00000088334"/>
<dbReference type="PeptideAtlas" id="Q9ESL4"/>
<dbReference type="ProteomicsDB" id="295749">
    <molecule id="Q9ESL4-1"/>
</dbReference>
<dbReference type="ProteomicsDB" id="295750">
    <molecule id="Q9ESL4-2"/>
</dbReference>
<dbReference type="ProteomicsDB" id="295751">
    <molecule id="Q9ESL4-3"/>
</dbReference>
<dbReference type="Pumba" id="Q9ESL4"/>
<dbReference type="Antibodypedia" id="2065">
    <property type="antibodies" value="318 antibodies from 34 providers"/>
</dbReference>
<dbReference type="DNASU" id="65964"/>
<dbReference type="Ensembl" id="ENSMUST00000090824.12">
    <molecule id="Q9ESL4-1"/>
    <property type="protein sequence ID" value="ENSMUSP00000088334.6"/>
    <property type="gene ID" value="ENSMUSG00000004085.15"/>
</dbReference>
<dbReference type="Ensembl" id="ENSMUST00000135469.8">
    <molecule id="Q9ESL4-2"/>
    <property type="protein sequence ID" value="ENSMUSP00000118983.2"/>
    <property type="gene ID" value="ENSMUSG00000004085.15"/>
</dbReference>
<dbReference type="GeneID" id="65964"/>
<dbReference type="KEGG" id="mmu:65964"/>
<dbReference type="UCSC" id="uc008kbs.2">
    <molecule id="Q9ESL4-3"/>
    <property type="organism name" value="mouse"/>
</dbReference>
<dbReference type="UCSC" id="uc008kbv.2">
    <molecule id="Q9ESL4-1"/>
    <property type="organism name" value="mouse"/>
</dbReference>
<dbReference type="AGR" id="MGI:2443258"/>
<dbReference type="CTD" id="51776"/>
<dbReference type="MGI" id="MGI:2443258">
    <property type="gene designation" value="Map3k20"/>
</dbReference>
<dbReference type="VEuPathDB" id="HostDB:ENSMUSG00000004085"/>
<dbReference type="eggNOG" id="KOG0192">
    <property type="taxonomic scope" value="Eukaryota"/>
</dbReference>
<dbReference type="GeneTree" id="ENSGT00940000161352"/>
<dbReference type="HOGENOM" id="CLU_019131_1_0_1"/>
<dbReference type="InParanoid" id="Q9ESL4"/>
<dbReference type="OMA" id="TEMSCQI"/>
<dbReference type="OrthoDB" id="339325at2759"/>
<dbReference type="PhylomeDB" id="Q9ESL4"/>
<dbReference type="TreeFam" id="TF106505"/>
<dbReference type="BioGRID-ORCS" id="65964">
    <property type="hits" value="6 hits in 75 CRISPR screens"/>
</dbReference>
<dbReference type="ChiTaRS" id="Zak">
    <property type="organism name" value="mouse"/>
</dbReference>
<dbReference type="PRO" id="PR:Q9ESL4"/>
<dbReference type="Proteomes" id="UP000000589">
    <property type="component" value="Chromosome 2"/>
</dbReference>
<dbReference type="RNAct" id="Q9ESL4">
    <property type="molecule type" value="protein"/>
</dbReference>
<dbReference type="Bgee" id="ENSMUSG00000004085">
    <property type="expression patterns" value="Expressed in interventricular septum and 213 other cell types or tissues"/>
</dbReference>
<dbReference type="ExpressionAtlas" id="Q9ESL4">
    <property type="expression patterns" value="baseline and differential"/>
</dbReference>
<dbReference type="GO" id="GO:0005737">
    <property type="term" value="C:cytoplasm"/>
    <property type="evidence" value="ECO:0000314"/>
    <property type="project" value="UniProtKB"/>
</dbReference>
<dbReference type="GO" id="GO:0005829">
    <property type="term" value="C:cytosol"/>
    <property type="evidence" value="ECO:0007669"/>
    <property type="project" value="Ensembl"/>
</dbReference>
<dbReference type="GO" id="GO:0005634">
    <property type="term" value="C:nucleus"/>
    <property type="evidence" value="ECO:0000314"/>
    <property type="project" value="MGI"/>
</dbReference>
<dbReference type="GO" id="GO:0005524">
    <property type="term" value="F:ATP binding"/>
    <property type="evidence" value="ECO:0000314"/>
    <property type="project" value="UniProtKB"/>
</dbReference>
<dbReference type="GO" id="GO:0004706">
    <property type="term" value="F:JUN kinase kinase kinase activity"/>
    <property type="evidence" value="ECO:0000250"/>
    <property type="project" value="UniProtKB"/>
</dbReference>
<dbReference type="GO" id="GO:0000287">
    <property type="term" value="F:magnesium ion binding"/>
    <property type="evidence" value="ECO:0000314"/>
    <property type="project" value="UniProtKB"/>
</dbReference>
<dbReference type="GO" id="GO:0004709">
    <property type="term" value="F:MAP kinase kinase kinase activity"/>
    <property type="evidence" value="ECO:0000314"/>
    <property type="project" value="MGI"/>
</dbReference>
<dbReference type="GO" id="GO:0030295">
    <property type="term" value="F:protein kinase activator activity"/>
    <property type="evidence" value="ECO:0000250"/>
    <property type="project" value="UniProtKB"/>
</dbReference>
<dbReference type="GO" id="GO:0106310">
    <property type="term" value="F:protein serine kinase activity"/>
    <property type="evidence" value="ECO:0007669"/>
    <property type="project" value="RHEA"/>
</dbReference>
<dbReference type="GO" id="GO:0004674">
    <property type="term" value="F:protein serine/threonine kinase activity"/>
    <property type="evidence" value="ECO:0000314"/>
    <property type="project" value="UniProtKB"/>
</dbReference>
<dbReference type="GO" id="GO:0043022">
    <property type="term" value="F:ribosome binding"/>
    <property type="evidence" value="ECO:0000250"/>
    <property type="project" value="UniProtKB"/>
</dbReference>
<dbReference type="GO" id="GO:0070181">
    <property type="term" value="F:small ribosomal subunit rRNA binding"/>
    <property type="evidence" value="ECO:0000250"/>
    <property type="project" value="UniProtKB"/>
</dbReference>
<dbReference type="GO" id="GO:0071480">
    <property type="term" value="P:cellular response to gamma radiation"/>
    <property type="evidence" value="ECO:0007669"/>
    <property type="project" value="Ensembl"/>
</dbReference>
<dbReference type="GO" id="GO:0071493">
    <property type="term" value="P:cellular response to UV-B"/>
    <property type="evidence" value="ECO:0000250"/>
    <property type="project" value="UniProtKB"/>
</dbReference>
<dbReference type="GO" id="GO:0007010">
    <property type="term" value="P:cytoskeleton organization"/>
    <property type="evidence" value="ECO:0000314"/>
    <property type="project" value="MGI"/>
</dbReference>
<dbReference type="GO" id="GO:0000077">
    <property type="term" value="P:DNA damage checkpoint signaling"/>
    <property type="evidence" value="ECO:0007669"/>
    <property type="project" value="Ensembl"/>
</dbReference>
<dbReference type="GO" id="GO:0042733">
    <property type="term" value="P:embryonic digit morphogenesis"/>
    <property type="evidence" value="ECO:0000315"/>
    <property type="project" value="MGI"/>
</dbReference>
<dbReference type="GO" id="GO:0140469">
    <property type="term" value="P:GCN2-mediated signaling"/>
    <property type="evidence" value="ECO:0000250"/>
    <property type="project" value="UniProtKB"/>
</dbReference>
<dbReference type="GO" id="GO:0035556">
    <property type="term" value="P:intracellular signal transduction"/>
    <property type="evidence" value="ECO:0000314"/>
    <property type="project" value="UniProtKB"/>
</dbReference>
<dbReference type="GO" id="GO:0007254">
    <property type="term" value="P:JNK cascade"/>
    <property type="evidence" value="ECO:0000315"/>
    <property type="project" value="UniProtKB"/>
</dbReference>
<dbReference type="GO" id="GO:0060173">
    <property type="term" value="P:limb development"/>
    <property type="evidence" value="ECO:0000315"/>
    <property type="project" value="MGI"/>
</dbReference>
<dbReference type="GO" id="GO:0038066">
    <property type="term" value="P:p38MAPK cascade"/>
    <property type="evidence" value="ECO:0000315"/>
    <property type="project" value="UniProtKB"/>
</dbReference>
<dbReference type="GO" id="GO:0043065">
    <property type="term" value="P:positive regulation of apoptotic process"/>
    <property type="evidence" value="ECO:0000250"/>
    <property type="project" value="UniProtKB"/>
</dbReference>
<dbReference type="GO" id="GO:1904291">
    <property type="term" value="P:positive regulation of mitotic DNA damage checkpoint"/>
    <property type="evidence" value="ECO:0000250"/>
    <property type="project" value="UniProtKB"/>
</dbReference>
<dbReference type="GO" id="GO:0043068">
    <property type="term" value="P:positive regulation of programmed cell death"/>
    <property type="evidence" value="ECO:0000250"/>
    <property type="project" value="UniProtKB"/>
</dbReference>
<dbReference type="GO" id="GO:0046777">
    <property type="term" value="P:protein autophosphorylation"/>
    <property type="evidence" value="ECO:0000250"/>
    <property type="project" value="UniProtKB"/>
</dbReference>
<dbReference type="GO" id="GO:0006468">
    <property type="term" value="P:protein phosphorylation"/>
    <property type="evidence" value="ECO:0000314"/>
    <property type="project" value="UniProtKB"/>
</dbReference>
<dbReference type="GO" id="GO:0070269">
    <property type="term" value="P:pyroptotic inflammatory response"/>
    <property type="evidence" value="ECO:0000250"/>
    <property type="project" value="UniProtKB"/>
</dbReference>
<dbReference type="GO" id="GO:0051403">
    <property type="term" value="P:stress-activated MAPK cascade"/>
    <property type="evidence" value="ECO:0000315"/>
    <property type="project" value="UniProtKB"/>
</dbReference>
<dbReference type="CDD" id="cd09529">
    <property type="entry name" value="SAM_MLTK"/>
    <property type="match status" value="1"/>
</dbReference>
<dbReference type="CDD" id="cd14060">
    <property type="entry name" value="STKc_MLTK"/>
    <property type="match status" value="1"/>
</dbReference>
<dbReference type="FunFam" id="1.10.150.50:FF:000065">
    <property type="entry name" value="mitogen-activated protein kinase kinase kinase 20 isoform X1"/>
    <property type="match status" value="1"/>
</dbReference>
<dbReference type="FunFam" id="3.30.200.20:FF:000220">
    <property type="entry name" value="mitogen-activated protein kinase kinase kinase 20 isoform X1"/>
    <property type="match status" value="1"/>
</dbReference>
<dbReference type="FunFam" id="1.10.510.10:FF:000243">
    <property type="entry name" value="mitogen-activated protein kinase kinase kinase 20 isoform X2"/>
    <property type="match status" value="1"/>
</dbReference>
<dbReference type="Gene3D" id="3.30.200.20">
    <property type="entry name" value="Phosphorylase Kinase, domain 1"/>
    <property type="match status" value="1"/>
</dbReference>
<dbReference type="Gene3D" id="1.10.150.50">
    <property type="entry name" value="Transcription Factor, Ets-1"/>
    <property type="match status" value="1"/>
</dbReference>
<dbReference type="Gene3D" id="1.10.510.10">
    <property type="entry name" value="Transferase(Phosphotransferase) domain 1"/>
    <property type="match status" value="1"/>
</dbReference>
<dbReference type="InterPro" id="IPR011009">
    <property type="entry name" value="Kinase-like_dom_sf"/>
</dbReference>
<dbReference type="InterPro" id="IPR000719">
    <property type="entry name" value="Prot_kinase_dom"/>
</dbReference>
<dbReference type="InterPro" id="IPR001660">
    <property type="entry name" value="SAM"/>
</dbReference>
<dbReference type="InterPro" id="IPR013761">
    <property type="entry name" value="SAM/pointed_sf"/>
</dbReference>
<dbReference type="InterPro" id="IPR001245">
    <property type="entry name" value="Ser-Thr/Tyr_kinase_cat_dom"/>
</dbReference>
<dbReference type="InterPro" id="IPR008271">
    <property type="entry name" value="Ser/Thr_kinase_AS"/>
</dbReference>
<dbReference type="InterPro" id="IPR051681">
    <property type="entry name" value="Ser/Thr_Kinases-Pseudokinases"/>
</dbReference>
<dbReference type="PANTHER" id="PTHR44329:SF288">
    <property type="entry name" value="MITOGEN-ACTIVATED PROTEIN KINASE KINASE KINASE 20"/>
    <property type="match status" value="1"/>
</dbReference>
<dbReference type="PANTHER" id="PTHR44329">
    <property type="entry name" value="SERINE/THREONINE-PROTEIN KINASE TNNI3K-RELATED"/>
    <property type="match status" value="1"/>
</dbReference>
<dbReference type="Pfam" id="PF07714">
    <property type="entry name" value="PK_Tyr_Ser-Thr"/>
    <property type="match status" value="1"/>
</dbReference>
<dbReference type="Pfam" id="PF00536">
    <property type="entry name" value="SAM_1"/>
    <property type="match status" value="1"/>
</dbReference>
<dbReference type="PRINTS" id="PR00109">
    <property type="entry name" value="TYRKINASE"/>
</dbReference>
<dbReference type="SMART" id="SM00220">
    <property type="entry name" value="S_TKc"/>
    <property type="match status" value="1"/>
</dbReference>
<dbReference type="SMART" id="SM00454">
    <property type="entry name" value="SAM"/>
    <property type="match status" value="1"/>
</dbReference>
<dbReference type="SUPFAM" id="SSF56112">
    <property type="entry name" value="Protein kinase-like (PK-like)"/>
    <property type="match status" value="1"/>
</dbReference>
<dbReference type="SUPFAM" id="SSF47769">
    <property type="entry name" value="SAM/Pointed domain"/>
    <property type="match status" value="1"/>
</dbReference>
<dbReference type="PROSITE" id="PS50011">
    <property type="entry name" value="PROTEIN_KINASE_DOM"/>
    <property type="match status" value="1"/>
</dbReference>
<dbReference type="PROSITE" id="PS00108">
    <property type="entry name" value="PROTEIN_KINASE_ST"/>
    <property type="match status" value="1"/>
</dbReference>
<dbReference type="PROSITE" id="PS50105">
    <property type="entry name" value="SAM_DOMAIN"/>
    <property type="match status" value="1"/>
</dbReference>
<feature type="initiator methionine" description="Removed" evidence="2">
    <location>
        <position position="1"/>
    </location>
</feature>
<feature type="chain" id="PRO_0000086339" description="Mitogen-activated protein kinase kinase kinase 20">
    <location>
        <begin position="2"/>
        <end position="802"/>
    </location>
</feature>
<feature type="domain" description="Protein kinase" evidence="3">
    <location>
        <begin position="16"/>
        <end position="277"/>
    </location>
</feature>
<feature type="domain" description="SAM" evidence="4">
    <location>
        <begin position="339"/>
        <end position="410"/>
    </location>
</feature>
<feature type="region of interest" description="Leucine-zipper">
    <location>
        <begin position="287"/>
        <end position="308"/>
    </location>
</feature>
<feature type="region of interest" description="Disordered" evidence="6">
    <location>
        <begin position="624"/>
        <end position="802"/>
    </location>
</feature>
<feature type="region of interest" description="Sensing domain (S)" evidence="2">
    <location>
        <begin position="670"/>
        <end position="713"/>
    </location>
</feature>
<feature type="region of interest" description="C-terminal domain (CTD)" evidence="2">
    <location>
        <begin position="776"/>
        <end position="802"/>
    </location>
</feature>
<feature type="compositionally biased region" description="Polar residues" evidence="6">
    <location>
        <begin position="624"/>
        <end position="642"/>
    </location>
</feature>
<feature type="compositionally biased region" description="Low complexity" evidence="6">
    <location>
        <begin position="643"/>
        <end position="666"/>
    </location>
</feature>
<feature type="compositionally biased region" description="Basic and acidic residues" evidence="6">
    <location>
        <begin position="667"/>
        <end position="678"/>
    </location>
</feature>
<feature type="compositionally biased region" description="Basic and acidic residues" evidence="6">
    <location>
        <begin position="728"/>
        <end position="741"/>
    </location>
</feature>
<feature type="active site" description="Proton acceptor" evidence="1 3 5">
    <location>
        <position position="133"/>
    </location>
</feature>
<feature type="binding site" evidence="1 3">
    <location>
        <begin position="22"/>
        <end position="30"/>
    </location>
    <ligand>
        <name>ATP</name>
        <dbReference type="ChEBI" id="CHEBI:30616"/>
    </ligand>
</feature>
<feature type="binding site" evidence="2 3">
    <location>
        <position position="45"/>
    </location>
    <ligand>
        <name>ATP</name>
        <dbReference type="ChEBI" id="CHEBI:30616"/>
    </ligand>
</feature>
<feature type="modified residue" description="N-acetylserine" evidence="2">
    <location>
        <position position="2"/>
    </location>
</feature>
<feature type="modified residue" description="Phosphoserine" evidence="2">
    <location>
        <position position="2"/>
    </location>
</feature>
<feature type="modified residue" description="Phosphoserine" evidence="2">
    <location>
        <position position="3"/>
    </location>
</feature>
<feature type="modified residue" description="Phosphoserine" evidence="2">
    <location>
        <position position="7"/>
    </location>
</feature>
<feature type="modified residue" description="Phosphothreonine; by autocatalysis" evidence="2">
    <location>
        <position position="161"/>
    </location>
</feature>
<feature type="modified residue" description="Phosphoserine; by autocatalysis" evidence="2">
    <location>
        <position position="165"/>
    </location>
</feature>
<feature type="modified residue" description="Phosphoserine" evidence="2">
    <location>
        <position position="275"/>
    </location>
</feature>
<feature type="modified residue" description="Phosphoserine" evidence="2">
    <location>
        <position position="302"/>
    </location>
</feature>
<feature type="modified residue" description="Phosphoserine" evidence="2">
    <location>
        <position position="567"/>
    </location>
</feature>
<feature type="modified residue" description="Phosphothreonine" evidence="2">
    <location>
        <position position="586"/>
    </location>
</feature>
<feature type="modified residue" description="Phosphoserine" evidence="2">
    <location>
        <position position="587"/>
    </location>
</feature>
<feature type="modified residue" description="Phosphoserine" evidence="2">
    <location>
        <position position="593"/>
    </location>
</feature>
<feature type="modified residue" description="Phosphoserine" evidence="2">
    <location>
        <position position="599"/>
    </location>
</feature>
<feature type="modified residue" description="Phosphothreonine" evidence="2">
    <location>
        <position position="628"/>
    </location>
</feature>
<feature type="modified residue" description="Phosphoserine" evidence="18">
    <location>
        <position position="634"/>
    </location>
</feature>
<feature type="modified residue" description="Phosphoserine" evidence="18">
    <location>
        <position position="638"/>
    </location>
</feature>
<feature type="modified residue" description="Phosphoserine" evidence="18">
    <location>
        <position position="649"/>
    </location>
</feature>
<feature type="modified residue" description="Phosphoserine" evidence="18">
    <location>
        <position position="650"/>
    </location>
</feature>
<feature type="modified residue" description="Phosphoserine" evidence="2">
    <location>
        <position position="661"/>
    </location>
</feature>
<feature type="modified residue" description="Phosphoserine" evidence="2">
    <location>
        <position position="685"/>
    </location>
</feature>
<feature type="modified residue" description="Phosphoserine" evidence="2">
    <location>
        <position position="720"/>
    </location>
</feature>
<feature type="modified residue" description="Phosphoserine" evidence="2">
    <location>
        <position position="727"/>
    </location>
</feature>
<feature type="modified residue" description="Phosphoserine" evidence="2">
    <location>
        <position position="733"/>
    </location>
</feature>
<feature type="modified residue" description="Phosphothreonine" evidence="2">
    <location>
        <position position="744"/>
    </location>
</feature>
<feature type="splice variant" id="VSP_051747" description="In isoform 3." evidence="12">
    <original>CEIEA</original>
    <variation>WVAPA</variation>
    <location>
        <begin position="285"/>
        <end position="289"/>
    </location>
</feature>
<feature type="splice variant" id="VSP_051748" description="In isoform 3." evidence="12">
    <location>
        <begin position="290"/>
        <end position="802"/>
    </location>
</feature>
<feature type="splice variant" id="VSP_051745" description="In isoform ZAKbeta." evidence="11">
    <original>PSFEIGAWTEDDVYFWVQQLVRKGESSVEMSGYASLFKENNITGKRLLLLEEEDLKDMGIVSKGHIIHFKSAIEKLTHDYLNLFHFPPLIKDSGGEPEENEEKIVNLELVFGFHLKPGTGPQD</original>
    <variation>LPLSARMSEESYFESKTEESNSAEMSCQITAASNGEGHGMNPGLQAMMLMGFGDVFSMNKAGAVLHSGMQINMQAKQNSSKTTCKRRGKKVNMALGFSDFDLSEGDDDDHDGDDAENDVDNSE</variation>
    <location>
        <begin position="332"/>
        <end position="454"/>
    </location>
</feature>
<feature type="splice variant" id="VSP_051746" description="In isoform ZAKbeta." evidence="11">
    <location>
        <begin position="455"/>
        <end position="802"/>
    </location>
</feature>
<feature type="mutagenesis site" description="Loss of kinase activity." evidence="7">
    <original>K</original>
    <variation>M</variation>
    <location>
        <position position="45"/>
    </location>
</feature>
<feature type="mutagenesis site" description="Causes a split-hand/split-foot phenotype in knockin mice. Gain-of-function mutant that cases a constitutive ribotoxic stress response (RSR)." evidence="10">
    <original>F</original>
    <variation>C</variation>
    <location>
        <position position="368"/>
    </location>
</feature>
<feature type="sequence conflict" description="In Ref. 2; BAC32371." evidence="14" ref="2">
    <original>P</original>
    <variation>Q</variation>
    <location>
        <position position="171"/>
    </location>
</feature>
<feature type="modified residue" description="Phosphoserine" evidence="18">
    <location sequence="Q9ESL4-2">
        <position position="434"/>
    </location>
</feature>
<feature type="modified residue" description="Phosphoserine" evidence="18">
    <location sequence="Q9ESL4-2">
        <position position="453"/>
    </location>
</feature>
<gene>
    <name evidence="17" type="primary">Map3k20</name>
    <name evidence="11" type="synonym">Mltk</name>
    <name evidence="13" type="synonym">Zak</name>
</gene>
<reference evidence="14 16" key="1">
    <citation type="journal article" date="2001" name="J. Biol. Chem.">
        <title>Identification and characterization of a novel MAP kinase kinase kinase, MLTK.</title>
        <authorList>
            <person name="Gotoh I."/>
            <person name="Adachi M."/>
            <person name="Nishida E."/>
        </authorList>
    </citation>
    <scope>NUCLEOTIDE SEQUENCE [MRNA] (ISOFORMS ZAKALPHA AND ZAKBETA)</scope>
    <scope>FUNCTION</scope>
    <scope>SUBCELLULAR LOCATION</scope>
    <scope>AUTOPHOSPHORYLATION</scope>
    <scope>HOMODIMERIZATION</scope>
    <scope>MUTAGENESIS OF LYS-45</scope>
    <source>
        <tissue evidence="7">Heart</tissue>
    </source>
</reference>
<reference key="2">
    <citation type="journal article" date="2005" name="Science">
        <title>The transcriptional landscape of the mammalian genome.</title>
        <authorList>
            <person name="Carninci P."/>
            <person name="Kasukawa T."/>
            <person name="Katayama S."/>
            <person name="Gough J."/>
            <person name="Frith M.C."/>
            <person name="Maeda N."/>
            <person name="Oyama R."/>
            <person name="Ravasi T."/>
            <person name="Lenhard B."/>
            <person name="Wells C."/>
            <person name="Kodzius R."/>
            <person name="Shimokawa K."/>
            <person name="Bajic V.B."/>
            <person name="Brenner S.E."/>
            <person name="Batalov S."/>
            <person name="Forrest A.R."/>
            <person name="Zavolan M."/>
            <person name="Davis M.J."/>
            <person name="Wilming L.G."/>
            <person name="Aidinis V."/>
            <person name="Allen J.E."/>
            <person name="Ambesi-Impiombato A."/>
            <person name="Apweiler R."/>
            <person name="Aturaliya R.N."/>
            <person name="Bailey T.L."/>
            <person name="Bansal M."/>
            <person name="Baxter L."/>
            <person name="Beisel K.W."/>
            <person name="Bersano T."/>
            <person name="Bono H."/>
            <person name="Chalk A.M."/>
            <person name="Chiu K.P."/>
            <person name="Choudhary V."/>
            <person name="Christoffels A."/>
            <person name="Clutterbuck D.R."/>
            <person name="Crowe M.L."/>
            <person name="Dalla E."/>
            <person name="Dalrymple B.P."/>
            <person name="de Bono B."/>
            <person name="Della Gatta G."/>
            <person name="di Bernardo D."/>
            <person name="Down T."/>
            <person name="Engstrom P."/>
            <person name="Fagiolini M."/>
            <person name="Faulkner G."/>
            <person name="Fletcher C.F."/>
            <person name="Fukushima T."/>
            <person name="Furuno M."/>
            <person name="Futaki S."/>
            <person name="Gariboldi M."/>
            <person name="Georgii-Hemming P."/>
            <person name="Gingeras T.R."/>
            <person name="Gojobori T."/>
            <person name="Green R.E."/>
            <person name="Gustincich S."/>
            <person name="Harbers M."/>
            <person name="Hayashi Y."/>
            <person name="Hensch T.K."/>
            <person name="Hirokawa N."/>
            <person name="Hill D."/>
            <person name="Huminiecki L."/>
            <person name="Iacono M."/>
            <person name="Ikeo K."/>
            <person name="Iwama A."/>
            <person name="Ishikawa T."/>
            <person name="Jakt M."/>
            <person name="Kanapin A."/>
            <person name="Katoh M."/>
            <person name="Kawasawa Y."/>
            <person name="Kelso J."/>
            <person name="Kitamura H."/>
            <person name="Kitano H."/>
            <person name="Kollias G."/>
            <person name="Krishnan S.P."/>
            <person name="Kruger A."/>
            <person name="Kummerfeld S.K."/>
            <person name="Kurochkin I.V."/>
            <person name="Lareau L.F."/>
            <person name="Lazarevic D."/>
            <person name="Lipovich L."/>
            <person name="Liu J."/>
            <person name="Liuni S."/>
            <person name="McWilliam S."/>
            <person name="Madan Babu M."/>
            <person name="Madera M."/>
            <person name="Marchionni L."/>
            <person name="Matsuda H."/>
            <person name="Matsuzawa S."/>
            <person name="Miki H."/>
            <person name="Mignone F."/>
            <person name="Miyake S."/>
            <person name="Morris K."/>
            <person name="Mottagui-Tabar S."/>
            <person name="Mulder N."/>
            <person name="Nakano N."/>
            <person name="Nakauchi H."/>
            <person name="Ng P."/>
            <person name="Nilsson R."/>
            <person name="Nishiguchi S."/>
            <person name="Nishikawa S."/>
            <person name="Nori F."/>
            <person name="Ohara O."/>
            <person name="Okazaki Y."/>
            <person name="Orlando V."/>
            <person name="Pang K.C."/>
            <person name="Pavan W.J."/>
            <person name="Pavesi G."/>
            <person name="Pesole G."/>
            <person name="Petrovsky N."/>
            <person name="Piazza S."/>
            <person name="Reed J."/>
            <person name="Reid J.F."/>
            <person name="Ring B.Z."/>
            <person name="Ringwald M."/>
            <person name="Rost B."/>
            <person name="Ruan Y."/>
            <person name="Salzberg S.L."/>
            <person name="Sandelin A."/>
            <person name="Schneider C."/>
            <person name="Schoenbach C."/>
            <person name="Sekiguchi K."/>
            <person name="Semple C.A."/>
            <person name="Seno S."/>
            <person name="Sessa L."/>
            <person name="Sheng Y."/>
            <person name="Shibata Y."/>
            <person name="Shimada H."/>
            <person name="Shimada K."/>
            <person name="Silva D."/>
            <person name="Sinclair B."/>
            <person name="Sperling S."/>
            <person name="Stupka E."/>
            <person name="Sugiura K."/>
            <person name="Sultana R."/>
            <person name="Takenaka Y."/>
            <person name="Taki K."/>
            <person name="Tammoja K."/>
            <person name="Tan S.L."/>
            <person name="Tang S."/>
            <person name="Taylor M.S."/>
            <person name="Tegner J."/>
            <person name="Teichmann S.A."/>
            <person name="Ueda H.R."/>
            <person name="van Nimwegen E."/>
            <person name="Verardo R."/>
            <person name="Wei C.L."/>
            <person name="Yagi K."/>
            <person name="Yamanishi H."/>
            <person name="Zabarovsky E."/>
            <person name="Zhu S."/>
            <person name="Zimmer A."/>
            <person name="Hide W."/>
            <person name="Bult C."/>
            <person name="Grimmond S.M."/>
            <person name="Teasdale R.D."/>
            <person name="Liu E.T."/>
            <person name="Brusic V."/>
            <person name="Quackenbush J."/>
            <person name="Wahlestedt C."/>
            <person name="Mattick J.S."/>
            <person name="Hume D.A."/>
            <person name="Kai C."/>
            <person name="Sasaki D."/>
            <person name="Tomaru Y."/>
            <person name="Fukuda S."/>
            <person name="Kanamori-Katayama M."/>
            <person name="Suzuki M."/>
            <person name="Aoki J."/>
            <person name="Arakawa T."/>
            <person name="Iida J."/>
            <person name="Imamura K."/>
            <person name="Itoh M."/>
            <person name="Kato T."/>
            <person name="Kawaji H."/>
            <person name="Kawagashira N."/>
            <person name="Kawashima T."/>
            <person name="Kojima M."/>
            <person name="Kondo S."/>
            <person name="Konno H."/>
            <person name="Nakano K."/>
            <person name="Ninomiya N."/>
            <person name="Nishio T."/>
            <person name="Okada M."/>
            <person name="Plessy C."/>
            <person name="Shibata K."/>
            <person name="Shiraki T."/>
            <person name="Suzuki S."/>
            <person name="Tagami M."/>
            <person name="Waki K."/>
            <person name="Watahiki A."/>
            <person name="Okamura-Oho Y."/>
            <person name="Suzuki H."/>
            <person name="Kawai J."/>
            <person name="Hayashizaki Y."/>
        </authorList>
    </citation>
    <scope>NUCLEOTIDE SEQUENCE [LARGE SCALE MRNA] (ISOFORMS ZAKALPHA AND 3)</scope>
    <source>
        <strain>C57BL/6J</strain>
        <tissue>Head</tissue>
    </source>
</reference>
<reference evidence="14 15" key="3">
    <citation type="journal article" date="2004" name="Genome Res.">
        <title>The status, quality, and expansion of the NIH full-length cDNA project: the Mammalian Gene Collection (MGC).</title>
        <authorList>
            <consortium name="The MGC Project Team"/>
        </authorList>
    </citation>
    <scope>NUCLEOTIDE SEQUENCE [LARGE SCALE MRNA] (ISOFORM ZAKALPHA)</scope>
    <source>
        <strain evidence="15">FVB/N</strain>
        <tissue evidence="15">Mammary gland</tissue>
    </source>
</reference>
<reference key="4">
    <citation type="submission" date="2007-04" db="UniProtKB">
        <authorList>
            <person name="Lubec G."/>
            <person name="Kang S.U."/>
        </authorList>
    </citation>
    <scope>PROTEIN SEQUENCE OF 225-233</scope>
    <scope>IDENTIFICATION BY MASS SPECTROMETRY</scope>
    <source>
        <strain>C57BL/6J</strain>
        <tissue>Brain</tissue>
    </source>
</reference>
<reference key="5">
    <citation type="journal article" date="2009" name="Immunity">
        <title>The phagosomal proteome in interferon-gamma-activated macrophages.</title>
        <authorList>
            <person name="Trost M."/>
            <person name="English L."/>
            <person name="Lemieux S."/>
            <person name="Courcelles M."/>
            <person name="Desjardins M."/>
            <person name="Thibault P."/>
        </authorList>
    </citation>
    <scope>IDENTIFICATION BY MASS SPECTROMETRY [LARGE SCALE ANALYSIS]</scope>
</reference>
<reference key="6">
    <citation type="journal article" date="2010" name="Cell">
        <title>A tissue-specific atlas of mouse protein phosphorylation and expression.</title>
        <authorList>
            <person name="Huttlin E.L."/>
            <person name="Jedrychowski M.P."/>
            <person name="Elias J.E."/>
            <person name="Goswami T."/>
            <person name="Rad R."/>
            <person name="Beausoleil S.A."/>
            <person name="Villen J."/>
            <person name="Haas W."/>
            <person name="Sowa M.E."/>
            <person name="Gygi S.P."/>
        </authorList>
    </citation>
    <scope>PHOSPHORYLATION [LARGE SCALE ANALYSIS] AT SER-634; SER-638; SER-649 AND SER-650</scope>
    <scope>PHOSPHORYLATION [LARGE SCALE ANALYSIS] AT SER-434 AND SER-453 (ISOFORM 2)</scope>
    <scope>IDENTIFICATION BY MASS SPECTROMETRY [LARGE SCALE ANALYSIS]</scope>
    <source>
        <tissue>Brown adipose tissue</tissue>
        <tissue>Heart</tissue>
        <tissue>Kidney</tissue>
        <tissue>Liver</tissue>
        <tissue>Lung</tissue>
        <tissue>Pancreas</tissue>
        <tissue>Spleen</tissue>
    </source>
</reference>
<reference key="7">
    <citation type="journal article" date="2016" name="Genome Res.">
        <title>Exome sequencing and CRISPR/Cas genome editing identify mutations of ZAK as a cause of limb defects in humans and mice.</title>
        <authorList>
            <person name="Spielmann M."/>
            <person name="Kakar N."/>
            <person name="Tayebi N."/>
            <person name="Leettola C."/>
            <person name="Nuernberg G."/>
            <person name="Sowada N."/>
            <person name="Lupianez D.G."/>
            <person name="Harabula I."/>
            <person name="Floettmann R."/>
            <person name="Horn D."/>
            <person name="Chan W.L."/>
            <person name="Wittler L."/>
            <person name="Yilmaz R."/>
            <person name="Altmueller J."/>
            <person name="Thiele H."/>
            <person name="van Bokhoven H."/>
            <person name="Schwartz C.E."/>
            <person name="Nuernberg P."/>
            <person name="Bowie J.U."/>
            <person name="Ahmad J."/>
            <person name="Kubisch C."/>
            <person name="Mundlos S."/>
            <person name="Borck G."/>
        </authorList>
    </citation>
    <scope>DISRUPTION PHENOTYPE</scope>
    <scope>DEVELOPMENTAL STAGE</scope>
</reference>
<reference key="8">
    <citation type="journal article" date="2016" name="Toxins">
        <title>A novel Zak knockout mouse with a defective ribotoxic stress response.</title>
        <authorList>
            <person name="Jandhyala D.M."/>
            <person name="Wong J."/>
            <person name="Mantis N.J."/>
            <person name="Magun B.E."/>
            <person name="Leong J.M."/>
            <person name="Thorpe C.M."/>
        </authorList>
    </citation>
    <scope>FUNCTION</scope>
    <scope>DISRUPTION PHENOTYPE</scope>
</reference>
<reference key="9">
    <citation type="journal article" date="2020" name="Mol. Cell">
        <title>ZAKalpha recognizes stalled ribosomes through partially redundant sensor domains.</title>
        <authorList>
            <person name="Vind A.C."/>
            <person name="Snieckute G."/>
            <person name="Blasius M."/>
            <person name="Tiedje C."/>
            <person name="Krogh N."/>
            <person name="Bekker-Jensen D.B."/>
            <person name="Andersen K.L."/>
            <person name="Nordgaard C."/>
            <person name="Tollenaere M.A.X."/>
            <person name="Lund A.H."/>
            <person name="Olsen J.V."/>
            <person name="Nielsen H."/>
            <person name="Bekker-Jensen S."/>
        </authorList>
    </citation>
    <scope>FUNCTION</scope>
    <scope>MUTAGENESIS OF PHE-368</scope>
</reference>
<protein>
    <recommendedName>
        <fullName>Mitogen-activated protein kinase kinase kinase 20</fullName>
        <ecNumber>2.7.11.25</ecNumber>
    </recommendedName>
    <alternativeName>
        <fullName>Leucine zipper- and sterile alpha motif kinase ZAK</fullName>
    </alternativeName>
    <alternativeName>
        <fullName>Leucine zipper- and sterile alpha motif-containing kinase</fullName>
    </alternativeName>
    <alternativeName>
        <fullName>MLK-like mitogen-activated protein triple kinase</fullName>
    </alternativeName>
    <alternativeName>
        <fullName>Mitogen-activated protein kinase kinase kinase MLT</fullName>
    </alternativeName>
    <alternativeName>
        <fullName evidence="11">Mixed lineage kinase-related kinase</fullName>
        <shortName evidence="11">MLK-related kinase</shortName>
        <shortName evidence="11">MRK</shortName>
    </alternativeName>
    <alternativeName>
        <fullName>Sterile alpha motif- and leucine zipper-containing kinase AZK</fullName>
    </alternativeName>
</protein>
<proteinExistence type="evidence at protein level"/>
<name>M3K20_MOUSE</name>